<comment type="function">
    <text>Polymerase that creates the 3'-poly(A) tail of mRNA's.</text>
</comment>
<comment type="catalytic activity">
    <reaction>
        <text>RNA(n) + ATP = RNA(n)-3'-adenine ribonucleotide + diphosphate</text>
        <dbReference type="Rhea" id="RHEA:11332"/>
        <dbReference type="Rhea" id="RHEA-COMP:14527"/>
        <dbReference type="Rhea" id="RHEA-COMP:17347"/>
        <dbReference type="ChEBI" id="CHEBI:30616"/>
        <dbReference type="ChEBI" id="CHEBI:33019"/>
        <dbReference type="ChEBI" id="CHEBI:140395"/>
        <dbReference type="ChEBI" id="CHEBI:173115"/>
        <dbReference type="EC" id="2.7.7.19"/>
    </reaction>
</comment>
<comment type="subunit">
    <text evidence="1">Heterodimer of a large (catalytic) subunit and a small (regulatory) subunit.</text>
</comment>
<comment type="similarity">
    <text evidence="2">Belongs to the poxviridae poly(A) polymerase catalytic subunit family.</text>
</comment>
<dbReference type="EC" id="2.7.7.19"/>
<dbReference type="EMBL" id="AY318871">
    <property type="protein sequence ID" value="AAR83475.1"/>
    <property type="molecule type" value="Genomic_DNA"/>
</dbReference>
<dbReference type="RefSeq" id="NP_955152.1">
    <property type="nucleotide sequence ID" value="NC_005309.1"/>
</dbReference>
<dbReference type="SMR" id="Q6VZL8"/>
<dbReference type="GeneID" id="2700390"/>
<dbReference type="KEGG" id="vg:2700390"/>
<dbReference type="OrthoDB" id="3428at10239"/>
<dbReference type="Proteomes" id="UP000168164">
    <property type="component" value="Genome"/>
</dbReference>
<dbReference type="GO" id="GO:0005524">
    <property type="term" value="F:ATP binding"/>
    <property type="evidence" value="ECO:0007669"/>
    <property type="project" value="UniProtKB-KW"/>
</dbReference>
<dbReference type="GO" id="GO:1990817">
    <property type="term" value="F:poly(A) RNA polymerase activity"/>
    <property type="evidence" value="ECO:0007669"/>
    <property type="project" value="UniProtKB-EC"/>
</dbReference>
<dbReference type="GO" id="GO:0006397">
    <property type="term" value="P:mRNA processing"/>
    <property type="evidence" value="ECO:0007669"/>
    <property type="project" value="UniProtKB-KW"/>
</dbReference>
<dbReference type="CDD" id="cd20919">
    <property type="entry name" value="polyA_pol_Pox"/>
    <property type="match status" value="1"/>
</dbReference>
<dbReference type="Gene3D" id="1.20.1270.320">
    <property type="entry name" value="Poxvirus poly(A) polymerase, N domain"/>
    <property type="match status" value="1"/>
</dbReference>
<dbReference type="Gene3D" id="3.30.460.60">
    <property type="entry name" value="Poxvirus poly(A) polymerase, nucleotidyltransferase domain"/>
    <property type="match status" value="1"/>
</dbReference>
<dbReference type="InterPro" id="IPR004976">
    <property type="entry name" value="PolyA_pol_cat_Poxvir"/>
</dbReference>
<dbReference type="InterPro" id="IPR037265">
    <property type="entry name" value="PolyA_pol_cat_sf"/>
</dbReference>
<dbReference type="InterPro" id="IPR024231">
    <property type="entry name" value="PolyA_pol_nucTrfase_Poxvir"/>
</dbReference>
<dbReference type="InterPro" id="IPR038419">
    <property type="entry name" value="PolyA_pol_nucTrfase_sf_Poxvir"/>
</dbReference>
<dbReference type="InterPro" id="IPR024397">
    <property type="entry name" value="Poxvirus_polyA_pol_cat_C"/>
</dbReference>
<dbReference type="InterPro" id="IPR024398">
    <property type="entry name" value="Poxvirus_polyA_pol_cat_N"/>
</dbReference>
<dbReference type="InterPro" id="IPR038337">
    <property type="entry name" value="Poxvirus_polyA_pol_cat_N_sf"/>
</dbReference>
<dbReference type="Pfam" id="PF03296">
    <property type="entry name" value="Pox_polyA_pol"/>
    <property type="match status" value="1"/>
</dbReference>
<dbReference type="Pfam" id="PF12629">
    <property type="entry name" value="Pox_polyA_pol_C"/>
    <property type="match status" value="1"/>
</dbReference>
<dbReference type="Pfam" id="PF12630">
    <property type="entry name" value="Pox_polyA_pol_N"/>
    <property type="match status" value="1"/>
</dbReference>
<dbReference type="PIRSF" id="PIRSF015693">
    <property type="entry name" value="VAC-48L_nuct"/>
    <property type="match status" value="1"/>
</dbReference>
<dbReference type="SUPFAM" id="SSF160957">
    <property type="entry name" value="Poly(A) polymerase catalytic subunit-like"/>
    <property type="match status" value="1"/>
</dbReference>
<name>PAP1_CNPV</name>
<feature type="chain" id="PRO_0000308926" description="Poly(A) polymerase catalytic subunit">
    <location>
        <begin position="1"/>
        <end position="472"/>
    </location>
</feature>
<feature type="active site" evidence="1">
    <location>
        <position position="194"/>
    </location>
</feature>
<feature type="active site" evidence="1">
    <location>
        <position position="196"/>
    </location>
</feature>
<organismHost>
    <name type="scientific">Serinus</name>
    <dbReference type="NCBI Taxonomy" id="9134"/>
</organismHost>
<reference key="1">
    <citation type="journal article" date="2004" name="J. Virol.">
        <title>The genome of canarypox virus.</title>
        <authorList>
            <person name="Tulman E.R."/>
            <person name="Afonso C.L."/>
            <person name="Lu Z."/>
            <person name="Zsak L."/>
            <person name="Kutish G.F."/>
            <person name="Rock D.L."/>
        </authorList>
    </citation>
    <scope>NUCLEOTIDE SEQUENCE [LARGE SCALE GENOMIC DNA]</scope>
    <source>
        <strain>Isolate ATCC VR-111 / Wheatley C93</strain>
    </source>
</reference>
<proteinExistence type="inferred from homology"/>
<sequence length="472" mass="56015">MDRRNQITSVIREYLGRNPVPKEYEVLKKQTLKLSKIINFNKDTFFFLIKKNKYTFFKDLNVSDEEIQERIDEYFTKQRRARRLGNLLAIVELQKLLVSSFTKTLGVLTTKALEYYPSNIRLDYSFMEKIADNILDSYNVVKPSEEVKGRHKVSDLVLHVNKIMEEYLRRHSNSCICYGSYSLHLLNKKIEYGDIDILQTNARIFLINIAFLIRFITGRCVVLLKVPFLKNYVVIHDENLNHVMDSFNIKQSTMDKIPKIMIDNMYIVDPCIQLLNTIKMFSQIDRLEDIHTKFDKLSIRLGTLLEYTRYRYSILLDSESILDVKYKIDIQNRKIILDFKKYNLNYIKCYFFLDEDELKKLIRKTPKTDDYIDLEAVTNSEYMILNKTMYTYFSNTTLLRSKDELHPITINALTSHALLYHVITKKFYDDLLGDLIRSLMIVEKVPVYEIIPRDKKRGKHTIIDIEKDVVFH</sequence>
<accession>Q6VZL8</accession>
<keyword id="KW-0067">ATP-binding</keyword>
<keyword id="KW-0507">mRNA processing</keyword>
<keyword id="KW-0547">Nucleotide-binding</keyword>
<keyword id="KW-1185">Reference proteome</keyword>
<keyword id="KW-0804">Transcription</keyword>
<keyword id="KW-0808">Transferase</keyword>
<evidence type="ECO:0000250" key="1"/>
<evidence type="ECO:0000305" key="2"/>
<organism>
    <name type="scientific">Canarypox virus</name>
    <name type="common">CNPV</name>
    <dbReference type="NCBI Taxonomy" id="44088"/>
    <lineage>
        <taxon>Viruses</taxon>
        <taxon>Varidnaviria</taxon>
        <taxon>Bamfordvirae</taxon>
        <taxon>Nucleocytoviricota</taxon>
        <taxon>Pokkesviricetes</taxon>
        <taxon>Chitovirales</taxon>
        <taxon>Poxviridae</taxon>
        <taxon>Chordopoxvirinae</taxon>
        <taxon>Avipoxvirus</taxon>
    </lineage>
</organism>
<protein>
    <recommendedName>
        <fullName>Poly(A) polymerase catalytic subunit</fullName>
        <ecNumber>2.7.7.19</ecNumber>
    </recommendedName>
    <alternativeName>
        <fullName>Poly(A) polymerase large subunit</fullName>
        <shortName>PAP-L</shortName>
    </alternativeName>
</protein>
<gene>
    <name type="primary">PAPL</name>
    <name type="ordered locus">CNPV129</name>
</gene>